<keyword id="KW-0021">Allosteric enzyme</keyword>
<keyword id="KW-0963">Cytoplasm</keyword>
<keyword id="KW-0520">NAD</keyword>
<keyword id="KW-0560">Oxidoreductase</keyword>
<keyword id="KW-0597">Phosphoprotein</keyword>
<keyword id="KW-1185">Reference proteome</keyword>
<organism>
    <name type="scientific">Oceanobacillus iheyensis (strain DSM 14371 / CIP 107618 / JCM 11309 / KCTC 3954 / HTE831)</name>
    <dbReference type="NCBI Taxonomy" id="221109"/>
    <lineage>
        <taxon>Bacteria</taxon>
        <taxon>Bacillati</taxon>
        <taxon>Bacillota</taxon>
        <taxon>Bacilli</taxon>
        <taxon>Bacillales</taxon>
        <taxon>Bacillaceae</taxon>
        <taxon>Oceanobacillus</taxon>
    </lineage>
</organism>
<accession>Q8ELF0</accession>
<sequence length="321" mass="35252">MRTSQQAVNRVVLIGGGSVGVSYAFALMNQGVTEELAIIDLDADKALGDVMDLNHGKAFAPSLTNVWLGEYGDCKDADIVCICAGANQQSGETRLDLVEKNMKIFKEIVTDVMNSGFNGIFLIATNPVDILTQAVISFSGLPPHRVIGSGTTLDTARLRYELGEYFHLSPKNIHAYIIGEHGDTELPLWSTATIGTVPLLTYLNRSESYTTEDLDDIFTNVRDAAYRIIQKKGATYYGIAMSLVRVTEAILKDEHSILTTSSFLQGEYGVDNVCIGVPTIINRNGVSEIIEVPMNEDEQKQFNHSVQTLKGIYEPTMQMMK</sequence>
<reference key="1">
    <citation type="journal article" date="2002" name="Nucleic Acids Res.">
        <title>Genome sequence of Oceanobacillus iheyensis isolated from the Iheya Ridge and its unexpected adaptive capabilities to extreme environments.</title>
        <authorList>
            <person name="Takami H."/>
            <person name="Takaki Y."/>
            <person name="Uchiyama I."/>
        </authorList>
    </citation>
    <scope>NUCLEOTIDE SEQUENCE [LARGE SCALE GENOMIC DNA]</scope>
    <source>
        <strain>DSM 14371 / CIP 107618 / JCM 11309 / KCTC 3954 / HTE831</strain>
    </source>
</reference>
<gene>
    <name evidence="1" type="primary">ldh</name>
    <name type="ordered locus">OB3279</name>
</gene>
<dbReference type="EC" id="1.1.1.27" evidence="1"/>
<dbReference type="EMBL" id="BA000028">
    <property type="protein sequence ID" value="BAC15235.1"/>
    <property type="molecule type" value="Genomic_DNA"/>
</dbReference>
<dbReference type="RefSeq" id="WP_011067675.1">
    <property type="nucleotide sequence ID" value="NC_004193.1"/>
</dbReference>
<dbReference type="SMR" id="Q8ELF0"/>
<dbReference type="STRING" id="221109.gene:10735531"/>
<dbReference type="KEGG" id="oih:OB3279"/>
<dbReference type="eggNOG" id="COG0039">
    <property type="taxonomic scope" value="Bacteria"/>
</dbReference>
<dbReference type="HOGENOM" id="CLU_045401_1_1_9"/>
<dbReference type="OrthoDB" id="9802969at2"/>
<dbReference type="PhylomeDB" id="Q8ELF0"/>
<dbReference type="UniPathway" id="UPA00554">
    <property type="reaction ID" value="UER00611"/>
</dbReference>
<dbReference type="Proteomes" id="UP000000822">
    <property type="component" value="Chromosome"/>
</dbReference>
<dbReference type="GO" id="GO:0005737">
    <property type="term" value="C:cytoplasm"/>
    <property type="evidence" value="ECO:0007669"/>
    <property type="project" value="UniProtKB-SubCell"/>
</dbReference>
<dbReference type="GO" id="GO:0004459">
    <property type="term" value="F:L-lactate dehydrogenase activity"/>
    <property type="evidence" value="ECO:0007669"/>
    <property type="project" value="UniProtKB-UniRule"/>
</dbReference>
<dbReference type="GO" id="GO:0006096">
    <property type="term" value="P:glycolytic process"/>
    <property type="evidence" value="ECO:0007669"/>
    <property type="project" value="UniProtKB-UniRule"/>
</dbReference>
<dbReference type="GO" id="GO:0006089">
    <property type="term" value="P:lactate metabolic process"/>
    <property type="evidence" value="ECO:0007669"/>
    <property type="project" value="TreeGrafter"/>
</dbReference>
<dbReference type="CDD" id="cd05291">
    <property type="entry name" value="HicDH_like"/>
    <property type="match status" value="1"/>
</dbReference>
<dbReference type="FunFam" id="3.40.50.720:FF:000018">
    <property type="entry name" value="Malate dehydrogenase"/>
    <property type="match status" value="1"/>
</dbReference>
<dbReference type="Gene3D" id="3.90.110.10">
    <property type="entry name" value="Lactate dehydrogenase/glycoside hydrolase, family 4, C-terminal"/>
    <property type="match status" value="1"/>
</dbReference>
<dbReference type="Gene3D" id="3.40.50.720">
    <property type="entry name" value="NAD(P)-binding Rossmann-like Domain"/>
    <property type="match status" value="1"/>
</dbReference>
<dbReference type="HAMAP" id="MF_00488">
    <property type="entry name" value="Lactate_dehydrog"/>
    <property type="match status" value="1"/>
</dbReference>
<dbReference type="InterPro" id="IPR001557">
    <property type="entry name" value="L-lactate/malate_DH"/>
</dbReference>
<dbReference type="InterPro" id="IPR011304">
    <property type="entry name" value="L-lactate_DH"/>
</dbReference>
<dbReference type="InterPro" id="IPR018177">
    <property type="entry name" value="L-lactate_DH_AS"/>
</dbReference>
<dbReference type="InterPro" id="IPR022383">
    <property type="entry name" value="Lactate/malate_DH_C"/>
</dbReference>
<dbReference type="InterPro" id="IPR001236">
    <property type="entry name" value="Lactate/malate_DH_N"/>
</dbReference>
<dbReference type="InterPro" id="IPR015955">
    <property type="entry name" value="Lactate_DH/Glyco_Ohase_4_C"/>
</dbReference>
<dbReference type="InterPro" id="IPR036291">
    <property type="entry name" value="NAD(P)-bd_dom_sf"/>
</dbReference>
<dbReference type="NCBIfam" id="TIGR01771">
    <property type="entry name" value="L-LDH-NAD"/>
    <property type="match status" value="1"/>
</dbReference>
<dbReference type="NCBIfam" id="NF000824">
    <property type="entry name" value="PRK00066.1"/>
    <property type="match status" value="1"/>
</dbReference>
<dbReference type="PANTHER" id="PTHR43128">
    <property type="entry name" value="L-2-HYDROXYCARBOXYLATE DEHYDROGENASE (NAD(P)(+))"/>
    <property type="match status" value="1"/>
</dbReference>
<dbReference type="PANTHER" id="PTHR43128:SF16">
    <property type="entry name" value="L-LACTATE DEHYDROGENASE"/>
    <property type="match status" value="1"/>
</dbReference>
<dbReference type="Pfam" id="PF02866">
    <property type="entry name" value="Ldh_1_C"/>
    <property type="match status" value="1"/>
</dbReference>
<dbReference type="Pfam" id="PF00056">
    <property type="entry name" value="Ldh_1_N"/>
    <property type="match status" value="1"/>
</dbReference>
<dbReference type="PIRSF" id="PIRSF000102">
    <property type="entry name" value="Lac_mal_DH"/>
    <property type="match status" value="1"/>
</dbReference>
<dbReference type="PRINTS" id="PR00086">
    <property type="entry name" value="LLDHDRGNASE"/>
</dbReference>
<dbReference type="SUPFAM" id="SSF56327">
    <property type="entry name" value="LDH C-terminal domain-like"/>
    <property type="match status" value="1"/>
</dbReference>
<dbReference type="SUPFAM" id="SSF51735">
    <property type="entry name" value="NAD(P)-binding Rossmann-fold domains"/>
    <property type="match status" value="1"/>
</dbReference>
<dbReference type="PROSITE" id="PS00064">
    <property type="entry name" value="L_LDH"/>
    <property type="match status" value="1"/>
</dbReference>
<comment type="function">
    <text evidence="1">Catalyzes the conversion of lactate to pyruvate.</text>
</comment>
<comment type="catalytic activity">
    <reaction evidence="1">
        <text>(S)-lactate + NAD(+) = pyruvate + NADH + H(+)</text>
        <dbReference type="Rhea" id="RHEA:23444"/>
        <dbReference type="ChEBI" id="CHEBI:15361"/>
        <dbReference type="ChEBI" id="CHEBI:15378"/>
        <dbReference type="ChEBI" id="CHEBI:16651"/>
        <dbReference type="ChEBI" id="CHEBI:57540"/>
        <dbReference type="ChEBI" id="CHEBI:57945"/>
        <dbReference type="EC" id="1.1.1.27"/>
    </reaction>
</comment>
<comment type="activity regulation">
    <text evidence="1">Allosterically activated by fructose 1,6-bisphosphate (FBP).</text>
</comment>
<comment type="pathway">
    <text evidence="1">Fermentation; pyruvate fermentation to lactate; (S)-lactate from pyruvate: step 1/1.</text>
</comment>
<comment type="subunit">
    <text evidence="1">Homotetramer.</text>
</comment>
<comment type="subcellular location">
    <subcellularLocation>
        <location evidence="1">Cytoplasm</location>
    </subcellularLocation>
</comment>
<comment type="similarity">
    <text evidence="1">Belongs to the LDH/MDH superfamily. LDH family.</text>
</comment>
<proteinExistence type="inferred from homology"/>
<protein>
    <recommendedName>
        <fullName evidence="1">L-lactate dehydrogenase</fullName>
        <shortName evidence="1">L-LDH</shortName>
        <ecNumber evidence="1">1.1.1.27</ecNumber>
    </recommendedName>
</protein>
<evidence type="ECO:0000255" key="1">
    <source>
        <dbReference type="HAMAP-Rule" id="MF_00488"/>
    </source>
</evidence>
<feature type="chain" id="PRO_0000168376" description="L-lactate dehydrogenase">
    <location>
        <begin position="1"/>
        <end position="321"/>
    </location>
</feature>
<feature type="active site" description="Proton acceptor" evidence="1">
    <location>
        <position position="181"/>
    </location>
</feature>
<feature type="binding site" evidence="1">
    <location>
        <position position="19"/>
    </location>
    <ligand>
        <name>NAD(+)</name>
        <dbReference type="ChEBI" id="CHEBI:57540"/>
    </ligand>
</feature>
<feature type="binding site" evidence="1">
    <location>
        <position position="40"/>
    </location>
    <ligand>
        <name>NAD(+)</name>
        <dbReference type="ChEBI" id="CHEBI:57540"/>
    </ligand>
</feature>
<feature type="binding site" evidence="1">
    <location>
        <position position="45"/>
    </location>
    <ligand>
        <name>NAD(+)</name>
        <dbReference type="ChEBI" id="CHEBI:57540"/>
    </ligand>
</feature>
<feature type="binding site" evidence="1">
    <location>
        <position position="71"/>
    </location>
    <ligand>
        <name>NAD(+)</name>
        <dbReference type="ChEBI" id="CHEBI:57540"/>
    </ligand>
</feature>
<feature type="binding site" evidence="1">
    <location>
        <begin position="85"/>
        <end position="86"/>
    </location>
    <ligand>
        <name>NAD(+)</name>
        <dbReference type="ChEBI" id="CHEBI:57540"/>
    </ligand>
</feature>
<feature type="binding site" evidence="1">
    <location>
        <position position="88"/>
    </location>
    <ligand>
        <name>substrate</name>
    </ligand>
</feature>
<feature type="binding site" evidence="1">
    <location>
        <position position="94"/>
    </location>
    <ligand>
        <name>substrate</name>
    </ligand>
</feature>
<feature type="binding site" evidence="1">
    <location>
        <begin position="124"/>
        <end position="126"/>
    </location>
    <ligand>
        <name>NAD(+)</name>
        <dbReference type="ChEBI" id="CHEBI:57540"/>
    </ligand>
</feature>
<feature type="binding site" evidence="1">
    <location>
        <begin position="126"/>
        <end position="129"/>
    </location>
    <ligand>
        <name>substrate</name>
    </ligand>
</feature>
<feature type="binding site" evidence="1">
    <location>
        <position position="149"/>
    </location>
    <ligand>
        <name>NAD(+)</name>
        <dbReference type="ChEBI" id="CHEBI:57540"/>
    </ligand>
</feature>
<feature type="binding site" evidence="1">
    <location>
        <begin position="154"/>
        <end position="157"/>
    </location>
    <ligand>
        <name>substrate</name>
    </ligand>
</feature>
<feature type="binding site" evidence="1">
    <location>
        <position position="159"/>
    </location>
    <ligand>
        <name>beta-D-fructose 1,6-bisphosphate</name>
        <dbReference type="ChEBI" id="CHEBI:32966"/>
        <note>allosteric activator</note>
    </ligand>
</feature>
<feature type="binding site" evidence="1">
    <location>
        <position position="174"/>
    </location>
    <ligand>
        <name>beta-D-fructose 1,6-bisphosphate</name>
        <dbReference type="ChEBI" id="CHEBI:32966"/>
        <note>allosteric activator</note>
    </ligand>
</feature>
<feature type="binding site" evidence="1">
    <location>
        <position position="235"/>
    </location>
    <ligand>
        <name>substrate</name>
    </ligand>
</feature>
<feature type="modified residue" description="Phosphotyrosine" evidence="1">
    <location>
        <position position="226"/>
    </location>
</feature>
<name>LDH_OCEIH</name>